<sequence>MIRTALLSVSDKNGIVPFAKSLHEQGIKLISTGGTAKLLAENGLPVVEISSLTKFPEMLDGRVKTLHPMVHGGLLARRDFPEHMAALKEYGINTIDMLVINLYPFNETVAKENCSFEDAVENIDIGGPAMLRAAAKNHQDVTVLISPEDYAPVLAEMKANQNSVSYKTNLALAKKVFAHTAQYDGAIANYLSALGDDLDHKARSAYPETLHLAFEKVQEMRYGENPHQAAAFYKDIYPVDGALANYKQLQGKELSYNNIADADSAWECVKSFTGNAGGAAACVIIKHANPCGVAVGASALEAYQKAFKTDPSSAFGGIIAFNVSCDGAAAEAISKQFVEVLIAPSFSDEAKTIFAAKQNMRLLEIPLGTAFNTFDFKRVGGGLLVQSPDAKNVLENEMCVVSKRLPTPSEMHDMMFAWRVAKFVKSNAIIYCANGMTLGIGAGQMSRVDSARMASIKAKNAGLSLKGSAVASDAFFPFRDGLDVVVNGGASCAIQPGGSMRDDEIIAAADEHGIAMIFTGTRHFRH</sequence>
<organism>
    <name type="scientific">Polynucleobacter necessarius subsp. necessarius (strain STIR1)</name>
    <dbReference type="NCBI Taxonomy" id="452638"/>
    <lineage>
        <taxon>Bacteria</taxon>
        <taxon>Pseudomonadati</taxon>
        <taxon>Pseudomonadota</taxon>
        <taxon>Betaproteobacteria</taxon>
        <taxon>Burkholderiales</taxon>
        <taxon>Burkholderiaceae</taxon>
        <taxon>Polynucleobacter</taxon>
    </lineage>
</organism>
<accession>B1XS23</accession>
<evidence type="ECO:0000255" key="1">
    <source>
        <dbReference type="HAMAP-Rule" id="MF_00139"/>
    </source>
</evidence>
<evidence type="ECO:0000255" key="2">
    <source>
        <dbReference type="PROSITE-ProRule" id="PRU01202"/>
    </source>
</evidence>
<gene>
    <name evidence="1" type="primary">purH</name>
    <name type="ordered locus">Pnec_1581</name>
</gene>
<comment type="catalytic activity">
    <reaction evidence="1">
        <text>(6R)-10-formyltetrahydrofolate + 5-amino-1-(5-phospho-beta-D-ribosyl)imidazole-4-carboxamide = 5-formamido-1-(5-phospho-D-ribosyl)imidazole-4-carboxamide + (6S)-5,6,7,8-tetrahydrofolate</text>
        <dbReference type="Rhea" id="RHEA:22192"/>
        <dbReference type="ChEBI" id="CHEBI:57453"/>
        <dbReference type="ChEBI" id="CHEBI:58467"/>
        <dbReference type="ChEBI" id="CHEBI:58475"/>
        <dbReference type="ChEBI" id="CHEBI:195366"/>
        <dbReference type="EC" id="2.1.2.3"/>
    </reaction>
</comment>
<comment type="catalytic activity">
    <reaction evidence="1">
        <text>IMP + H2O = 5-formamido-1-(5-phospho-D-ribosyl)imidazole-4-carboxamide</text>
        <dbReference type="Rhea" id="RHEA:18445"/>
        <dbReference type="ChEBI" id="CHEBI:15377"/>
        <dbReference type="ChEBI" id="CHEBI:58053"/>
        <dbReference type="ChEBI" id="CHEBI:58467"/>
        <dbReference type="EC" id="3.5.4.10"/>
    </reaction>
</comment>
<comment type="pathway">
    <text evidence="1">Purine metabolism; IMP biosynthesis via de novo pathway; 5-formamido-1-(5-phospho-D-ribosyl)imidazole-4-carboxamide from 5-amino-1-(5-phospho-D-ribosyl)imidazole-4-carboxamide (10-formyl THF route): step 1/1.</text>
</comment>
<comment type="pathway">
    <text evidence="1">Purine metabolism; IMP biosynthesis via de novo pathway; IMP from 5-formamido-1-(5-phospho-D-ribosyl)imidazole-4-carboxamide: step 1/1.</text>
</comment>
<comment type="domain">
    <text evidence="1">The IMP cyclohydrolase activity resides in the N-terminal region.</text>
</comment>
<comment type="similarity">
    <text evidence="1">Belongs to the PurH family.</text>
</comment>
<reference key="1">
    <citation type="journal article" date="2013" name="Proc. Natl. Acad. Sci. U.S.A.">
        <title>Polynucleobacter necessarius, a model for genome reduction in both free-living and symbiotic bacteria.</title>
        <authorList>
            <person name="Boscaro V."/>
            <person name="Felletti M."/>
            <person name="Vannini C."/>
            <person name="Ackerman M.S."/>
            <person name="Chain P.S."/>
            <person name="Malfatti S."/>
            <person name="Vergez L.M."/>
            <person name="Shin M."/>
            <person name="Doak T.G."/>
            <person name="Lynch M."/>
            <person name="Petroni G."/>
        </authorList>
    </citation>
    <scope>NUCLEOTIDE SEQUENCE [LARGE SCALE GENOMIC DNA]</scope>
    <source>
        <strain>STIR1</strain>
    </source>
</reference>
<keyword id="KW-0378">Hydrolase</keyword>
<keyword id="KW-0511">Multifunctional enzyme</keyword>
<keyword id="KW-0658">Purine biosynthesis</keyword>
<keyword id="KW-0808">Transferase</keyword>
<proteinExistence type="inferred from homology"/>
<dbReference type="EC" id="2.1.2.3" evidence="1"/>
<dbReference type="EC" id="3.5.4.10" evidence="1"/>
<dbReference type="EMBL" id="CP001010">
    <property type="protein sequence ID" value="ACB44658.1"/>
    <property type="molecule type" value="Genomic_DNA"/>
</dbReference>
<dbReference type="SMR" id="B1XS23"/>
<dbReference type="STRING" id="452638.Pnec_1581"/>
<dbReference type="KEGG" id="pne:Pnec_1581"/>
<dbReference type="eggNOG" id="COG0138">
    <property type="taxonomic scope" value="Bacteria"/>
</dbReference>
<dbReference type="HOGENOM" id="CLU_016316_5_2_4"/>
<dbReference type="OrthoDB" id="9802065at2"/>
<dbReference type="UniPathway" id="UPA00074">
    <property type="reaction ID" value="UER00133"/>
</dbReference>
<dbReference type="UniPathway" id="UPA00074">
    <property type="reaction ID" value="UER00135"/>
</dbReference>
<dbReference type="GO" id="GO:0005829">
    <property type="term" value="C:cytosol"/>
    <property type="evidence" value="ECO:0007669"/>
    <property type="project" value="TreeGrafter"/>
</dbReference>
<dbReference type="GO" id="GO:0003937">
    <property type="term" value="F:IMP cyclohydrolase activity"/>
    <property type="evidence" value="ECO:0007669"/>
    <property type="project" value="UniProtKB-UniRule"/>
</dbReference>
<dbReference type="GO" id="GO:0004643">
    <property type="term" value="F:phosphoribosylaminoimidazolecarboxamide formyltransferase activity"/>
    <property type="evidence" value="ECO:0007669"/>
    <property type="project" value="UniProtKB-UniRule"/>
</dbReference>
<dbReference type="GO" id="GO:0006189">
    <property type="term" value="P:'de novo' IMP biosynthetic process"/>
    <property type="evidence" value="ECO:0007669"/>
    <property type="project" value="UniProtKB-UniRule"/>
</dbReference>
<dbReference type="CDD" id="cd01421">
    <property type="entry name" value="IMPCH"/>
    <property type="match status" value="1"/>
</dbReference>
<dbReference type="FunFam" id="3.40.140.20:FF:000001">
    <property type="entry name" value="Bifunctional purine biosynthesis protein PurH"/>
    <property type="match status" value="1"/>
</dbReference>
<dbReference type="FunFam" id="3.40.140.20:FF:000002">
    <property type="entry name" value="Bifunctional purine biosynthesis protein PurH"/>
    <property type="match status" value="1"/>
</dbReference>
<dbReference type="FunFam" id="3.40.50.1380:FF:000001">
    <property type="entry name" value="Bifunctional purine biosynthesis protein PurH"/>
    <property type="match status" value="1"/>
</dbReference>
<dbReference type="Gene3D" id="3.40.140.20">
    <property type="match status" value="2"/>
</dbReference>
<dbReference type="Gene3D" id="3.40.50.1380">
    <property type="entry name" value="Methylglyoxal synthase-like domain"/>
    <property type="match status" value="1"/>
</dbReference>
<dbReference type="HAMAP" id="MF_00139">
    <property type="entry name" value="PurH"/>
    <property type="match status" value="1"/>
</dbReference>
<dbReference type="InterPro" id="IPR024051">
    <property type="entry name" value="AICAR_Tfase_dup_dom_sf"/>
</dbReference>
<dbReference type="InterPro" id="IPR016193">
    <property type="entry name" value="Cytidine_deaminase-like"/>
</dbReference>
<dbReference type="InterPro" id="IPR011607">
    <property type="entry name" value="MGS-like_dom"/>
</dbReference>
<dbReference type="InterPro" id="IPR036914">
    <property type="entry name" value="MGS-like_dom_sf"/>
</dbReference>
<dbReference type="InterPro" id="IPR002695">
    <property type="entry name" value="PurH-like"/>
</dbReference>
<dbReference type="NCBIfam" id="NF002049">
    <property type="entry name" value="PRK00881.1"/>
    <property type="match status" value="1"/>
</dbReference>
<dbReference type="NCBIfam" id="TIGR00355">
    <property type="entry name" value="purH"/>
    <property type="match status" value="1"/>
</dbReference>
<dbReference type="PANTHER" id="PTHR11692:SF0">
    <property type="entry name" value="BIFUNCTIONAL PURINE BIOSYNTHESIS PROTEIN ATIC"/>
    <property type="match status" value="1"/>
</dbReference>
<dbReference type="PANTHER" id="PTHR11692">
    <property type="entry name" value="BIFUNCTIONAL PURINE BIOSYNTHESIS PROTEIN PURH"/>
    <property type="match status" value="1"/>
</dbReference>
<dbReference type="Pfam" id="PF01808">
    <property type="entry name" value="AICARFT_IMPCHas"/>
    <property type="match status" value="1"/>
</dbReference>
<dbReference type="Pfam" id="PF02142">
    <property type="entry name" value="MGS"/>
    <property type="match status" value="1"/>
</dbReference>
<dbReference type="PIRSF" id="PIRSF000414">
    <property type="entry name" value="AICARFT_IMPCHas"/>
    <property type="match status" value="1"/>
</dbReference>
<dbReference type="SMART" id="SM00798">
    <property type="entry name" value="AICARFT_IMPCHas"/>
    <property type="match status" value="1"/>
</dbReference>
<dbReference type="SMART" id="SM00851">
    <property type="entry name" value="MGS"/>
    <property type="match status" value="1"/>
</dbReference>
<dbReference type="SUPFAM" id="SSF53927">
    <property type="entry name" value="Cytidine deaminase-like"/>
    <property type="match status" value="1"/>
</dbReference>
<dbReference type="SUPFAM" id="SSF52335">
    <property type="entry name" value="Methylglyoxal synthase-like"/>
    <property type="match status" value="1"/>
</dbReference>
<dbReference type="PROSITE" id="PS51855">
    <property type="entry name" value="MGS"/>
    <property type="match status" value="1"/>
</dbReference>
<protein>
    <recommendedName>
        <fullName evidence="1">Bifunctional purine biosynthesis protein PurH</fullName>
    </recommendedName>
    <domain>
        <recommendedName>
            <fullName evidence="1">Phosphoribosylaminoimidazolecarboxamide formyltransferase</fullName>
            <ecNumber evidence="1">2.1.2.3</ecNumber>
        </recommendedName>
        <alternativeName>
            <fullName evidence="1">AICAR transformylase</fullName>
        </alternativeName>
    </domain>
    <domain>
        <recommendedName>
            <fullName evidence="1">IMP cyclohydrolase</fullName>
            <ecNumber evidence="1">3.5.4.10</ecNumber>
        </recommendedName>
        <alternativeName>
            <fullName evidence="1">ATIC</fullName>
        </alternativeName>
        <alternativeName>
            <fullName evidence="1">IMP synthase</fullName>
        </alternativeName>
        <alternativeName>
            <fullName evidence="1">Inosinicase</fullName>
        </alternativeName>
    </domain>
</protein>
<feature type="chain" id="PRO_1000096080" description="Bifunctional purine biosynthesis protein PurH">
    <location>
        <begin position="1"/>
        <end position="526"/>
    </location>
</feature>
<feature type="domain" description="MGS-like" evidence="2">
    <location>
        <begin position="1"/>
        <end position="145"/>
    </location>
</feature>
<name>PUR9_POLNS</name>